<feature type="signal peptide" evidence="1">
    <location>
        <begin position="1"/>
        <end position="27"/>
    </location>
</feature>
<feature type="chain" id="PRO_0000024847" description="Uncharacterized protein YlxY">
    <location>
        <begin position="28"/>
        <end position="319"/>
    </location>
</feature>
<feature type="domain" description="NodB homology" evidence="2">
    <location>
        <begin position="130"/>
        <end position="306"/>
    </location>
</feature>
<accession>P50850</accession>
<accession>O31758</accession>
<name>YLXY_BACSU</name>
<proteinExistence type="inferred from homology"/>
<protein>
    <recommendedName>
        <fullName>Uncharacterized protein YlxY</fullName>
    </recommendedName>
</protein>
<evidence type="ECO:0000255" key="1"/>
<evidence type="ECO:0000255" key="2">
    <source>
        <dbReference type="PROSITE-ProRule" id="PRU01014"/>
    </source>
</evidence>
<evidence type="ECO:0000305" key="3"/>
<reference key="1">
    <citation type="journal article" date="1997" name="Nature">
        <title>The complete genome sequence of the Gram-positive bacterium Bacillus subtilis.</title>
        <authorList>
            <person name="Kunst F."/>
            <person name="Ogasawara N."/>
            <person name="Moszer I."/>
            <person name="Albertini A.M."/>
            <person name="Alloni G."/>
            <person name="Azevedo V."/>
            <person name="Bertero M.G."/>
            <person name="Bessieres P."/>
            <person name="Bolotin A."/>
            <person name="Borchert S."/>
            <person name="Borriss R."/>
            <person name="Boursier L."/>
            <person name="Brans A."/>
            <person name="Braun M."/>
            <person name="Brignell S.C."/>
            <person name="Bron S."/>
            <person name="Brouillet S."/>
            <person name="Bruschi C.V."/>
            <person name="Caldwell B."/>
            <person name="Capuano V."/>
            <person name="Carter N.M."/>
            <person name="Choi S.-K."/>
            <person name="Codani J.-J."/>
            <person name="Connerton I.F."/>
            <person name="Cummings N.J."/>
            <person name="Daniel R.A."/>
            <person name="Denizot F."/>
            <person name="Devine K.M."/>
            <person name="Duesterhoeft A."/>
            <person name="Ehrlich S.D."/>
            <person name="Emmerson P.T."/>
            <person name="Entian K.-D."/>
            <person name="Errington J."/>
            <person name="Fabret C."/>
            <person name="Ferrari E."/>
            <person name="Foulger D."/>
            <person name="Fritz C."/>
            <person name="Fujita M."/>
            <person name="Fujita Y."/>
            <person name="Fuma S."/>
            <person name="Galizzi A."/>
            <person name="Galleron N."/>
            <person name="Ghim S.-Y."/>
            <person name="Glaser P."/>
            <person name="Goffeau A."/>
            <person name="Golightly E.J."/>
            <person name="Grandi G."/>
            <person name="Guiseppi G."/>
            <person name="Guy B.J."/>
            <person name="Haga K."/>
            <person name="Haiech J."/>
            <person name="Harwood C.R."/>
            <person name="Henaut A."/>
            <person name="Hilbert H."/>
            <person name="Holsappel S."/>
            <person name="Hosono S."/>
            <person name="Hullo M.-F."/>
            <person name="Itaya M."/>
            <person name="Jones L.-M."/>
            <person name="Joris B."/>
            <person name="Karamata D."/>
            <person name="Kasahara Y."/>
            <person name="Klaerr-Blanchard M."/>
            <person name="Klein C."/>
            <person name="Kobayashi Y."/>
            <person name="Koetter P."/>
            <person name="Koningstein G."/>
            <person name="Krogh S."/>
            <person name="Kumano M."/>
            <person name="Kurita K."/>
            <person name="Lapidus A."/>
            <person name="Lardinois S."/>
            <person name="Lauber J."/>
            <person name="Lazarevic V."/>
            <person name="Lee S.-M."/>
            <person name="Levine A."/>
            <person name="Liu H."/>
            <person name="Masuda S."/>
            <person name="Mauel C."/>
            <person name="Medigue C."/>
            <person name="Medina N."/>
            <person name="Mellado R.P."/>
            <person name="Mizuno M."/>
            <person name="Moestl D."/>
            <person name="Nakai S."/>
            <person name="Noback M."/>
            <person name="Noone D."/>
            <person name="O'Reilly M."/>
            <person name="Ogawa K."/>
            <person name="Ogiwara A."/>
            <person name="Oudega B."/>
            <person name="Park S.-H."/>
            <person name="Parro V."/>
            <person name="Pohl T.M."/>
            <person name="Portetelle D."/>
            <person name="Porwollik S."/>
            <person name="Prescott A.M."/>
            <person name="Presecan E."/>
            <person name="Pujic P."/>
            <person name="Purnelle B."/>
            <person name="Rapoport G."/>
            <person name="Rey M."/>
            <person name="Reynolds S."/>
            <person name="Rieger M."/>
            <person name="Rivolta C."/>
            <person name="Rocha E."/>
            <person name="Roche B."/>
            <person name="Rose M."/>
            <person name="Sadaie Y."/>
            <person name="Sato T."/>
            <person name="Scanlan E."/>
            <person name="Schleich S."/>
            <person name="Schroeter R."/>
            <person name="Scoffone F."/>
            <person name="Sekiguchi J."/>
            <person name="Sekowska A."/>
            <person name="Seror S.J."/>
            <person name="Serror P."/>
            <person name="Shin B.-S."/>
            <person name="Soldo B."/>
            <person name="Sorokin A."/>
            <person name="Tacconi E."/>
            <person name="Takagi T."/>
            <person name="Takahashi H."/>
            <person name="Takemaru K."/>
            <person name="Takeuchi M."/>
            <person name="Tamakoshi A."/>
            <person name="Tanaka T."/>
            <person name="Terpstra P."/>
            <person name="Tognoni A."/>
            <person name="Tosato V."/>
            <person name="Uchiyama S."/>
            <person name="Vandenbol M."/>
            <person name="Vannier F."/>
            <person name="Vassarotti A."/>
            <person name="Viari A."/>
            <person name="Wambutt R."/>
            <person name="Wedler E."/>
            <person name="Wedler H."/>
            <person name="Weitzenegger T."/>
            <person name="Winters P."/>
            <person name="Wipat A."/>
            <person name="Yamamoto H."/>
            <person name="Yamane K."/>
            <person name="Yasumoto K."/>
            <person name="Yata K."/>
            <person name="Yoshida K."/>
            <person name="Yoshikawa H.-F."/>
            <person name="Zumstein E."/>
            <person name="Yoshikawa H."/>
            <person name="Danchin A."/>
        </authorList>
    </citation>
    <scope>NUCLEOTIDE SEQUENCE [LARGE SCALE GENOMIC DNA]</scope>
    <source>
        <strain>168</strain>
    </source>
</reference>
<reference key="2">
    <citation type="journal article" date="1996" name="Mol. Microbiol.">
        <title>Polynucleotide phosphorylase is necessary for competence development in Bacillus subtilis.</title>
        <authorList>
            <person name="Luttinger A."/>
            <person name="Hahn J."/>
            <person name="Dubnau D."/>
        </authorList>
    </citation>
    <scope>NUCLEOTIDE SEQUENCE [GENOMIC DNA] OF 1-282</scope>
</reference>
<organism>
    <name type="scientific">Bacillus subtilis (strain 168)</name>
    <dbReference type="NCBI Taxonomy" id="224308"/>
    <lineage>
        <taxon>Bacteria</taxon>
        <taxon>Bacillati</taxon>
        <taxon>Bacillota</taxon>
        <taxon>Bacilli</taxon>
        <taxon>Bacillales</taxon>
        <taxon>Bacillaceae</taxon>
        <taxon>Bacillus</taxon>
    </lineage>
</organism>
<dbReference type="EMBL" id="AL009126">
    <property type="protein sequence ID" value="CAB13543.1"/>
    <property type="molecule type" value="Genomic_DNA"/>
</dbReference>
<dbReference type="EMBL" id="U29668">
    <property type="protein sequence ID" value="AAC43596.1"/>
    <property type="status" value="ALT_FRAME"/>
    <property type="molecule type" value="Genomic_DNA"/>
</dbReference>
<dbReference type="PIR" id="H69882">
    <property type="entry name" value="H69882"/>
</dbReference>
<dbReference type="RefSeq" id="NP_389552.1">
    <property type="nucleotide sequence ID" value="NC_000964.3"/>
</dbReference>
<dbReference type="RefSeq" id="WP_003244721.1">
    <property type="nucleotide sequence ID" value="NZ_OZ025638.1"/>
</dbReference>
<dbReference type="SMR" id="P50850"/>
<dbReference type="FunCoup" id="P50850">
    <property type="interactions" value="44"/>
</dbReference>
<dbReference type="STRING" id="224308.BSU16700"/>
<dbReference type="PaxDb" id="224308-BSU16700"/>
<dbReference type="EnsemblBacteria" id="CAB13543">
    <property type="protein sequence ID" value="CAB13543"/>
    <property type="gene ID" value="BSU_16700"/>
</dbReference>
<dbReference type="GeneID" id="939649"/>
<dbReference type="KEGG" id="bsu:BSU16700"/>
<dbReference type="PATRIC" id="fig|224308.179.peg.1811"/>
<dbReference type="eggNOG" id="COG0726">
    <property type="taxonomic scope" value="Bacteria"/>
</dbReference>
<dbReference type="InParanoid" id="P50850"/>
<dbReference type="OrthoDB" id="9812065at2"/>
<dbReference type="PhylomeDB" id="P50850"/>
<dbReference type="BioCyc" id="BSUB:BSU16700-MONOMER"/>
<dbReference type="Proteomes" id="UP000001570">
    <property type="component" value="Chromosome"/>
</dbReference>
<dbReference type="GO" id="GO:0016810">
    <property type="term" value="F:hydrolase activity, acting on carbon-nitrogen (but not peptide) bonds"/>
    <property type="evidence" value="ECO:0007669"/>
    <property type="project" value="InterPro"/>
</dbReference>
<dbReference type="GO" id="GO:0005975">
    <property type="term" value="P:carbohydrate metabolic process"/>
    <property type="evidence" value="ECO:0007669"/>
    <property type="project" value="InterPro"/>
</dbReference>
<dbReference type="CDD" id="cd10950">
    <property type="entry name" value="CE4_BsYlxY_like"/>
    <property type="match status" value="1"/>
</dbReference>
<dbReference type="Gene3D" id="3.20.20.370">
    <property type="entry name" value="Glycoside hydrolase/deacetylase"/>
    <property type="match status" value="1"/>
</dbReference>
<dbReference type="InterPro" id="IPR011330">
    <property type="entry name" value="Glyco_hydro/deAcase_b/a-brl"/>
</dbReference>
<dbReference type="InterPro" id="IPR002509">
    <property type="entry name" value="NODB_dom"/>
</dbReference>
<dbReference type="InterPro" id="IPR050248">
    <property type="entry name" value="Polysacc_deacetylase_ArnD"/>
</dbReference>
<dbReference type="InterPro" id="IPR014228">
    <property type="entry name" value="Spore_polysacc_deacetyl_YlxY"/>
</dbReference>
<dbReference type="InterPro" id="IPR010916">
    <property type="entry name" value="TonB_box_CS"/>
</dbReference>
<dbReference type="NCBIfam" id="TIGR02873">
    <property type="entry name" value="spore_ylxY"/>
    <property type="match status" value="1"/>
</dbReference>
<dbReference type="PANTHER" id="PTHR10587:SF80">
    <property type="entry name" value="CHITOOLIGOSACCHARIDE DEACETYLASE"/>
    <property type="match status" value="1"/>
</dbReference>
<dbReference type="PANTHER" id="PTHR10587">
    <property type="entry name" value="GLYCOSYL TRANSFERASE-RELATED"/>
    <property type="match status" value="1"/>
</dbReference>
<dbReference type="Pfam" id="PF01522">
    <property type="entry name" value="Polysacc_deac_1"/>
    <property type="match status" value="1"/>
</dbReference>
<dbReference type="SUPFAM" id="SSF88713">
    <property type="entry name" value="Glycoside hydrolase/deacetylase"/>
    <property type="match status" value="1"/>
</dbReference>
<dbReference type="PROSITE" id="PS51677">
    <property type="entry name" value="NODB"/>
    <property type="match status" value="1"/>
</dbReference>
<comment type="similarity">
    <text evidence="3">Belongs to the polysaccharide deacetylase family.</text>
</comment>
<comment type="sequence caution" evidence="3">
    <conflict type="frameshift">
        <sequence resource="EMBL-CDS" id="AAC43596"/>
    </conflict>
</comment>
<sequence length="319" mass="36465">MYKKFVPFAVFLFLFFVSFEMMENPHALDYIGAMKKDTVTVTASKDPLYEELLQKAPEYEVKPQNARIDKVWKSIPGYNGLKVNIEQSYKKMKQHGKFREKDLVYSQVKPSVHLESLQPEPIYKGNPDKPMVAFLINVAWGNEYLEKMLPILQKHQVKATFFLEGNWVRNNVQLAKKIAKDGHEIGNHSYNHPDMSKLTTGRISEQLDKTNEQIEQTIGVKPKWFAPPSGSFRKAVIDIAAEKQMGTVMWTVDTIDWQKPAPSVLQTRVLSKIHNGAMILMHPTDPTAESLEALITQIKDKGYALGTVTELMDETRLLK</sequence>
<keyword id="KW-0378">Hydrolase</keyword>
<keyword id="KW-1185">Reference proteome</keyword>
<keyword id="KW-0732">Signal</keyword>
<gene>
    <name type="primary">ylxY</name>
    <name type="synonym">ymxI</name>
    <name type="ordered locus">BSU16700</name>
</gene>